<organism>
    <name type="scientific">Xenorhabdus nematophila (strain ATCC 19061 / DSM 3370 / CCUG 14189 / LMG 1036 / NCIMB 9965 / AN6)</name>
    <dbReference type="NCBI Taxonomy" id="406817"/>
    <lineage>
        <taxon>Bacteria</taxon>
        <taxon>Pseudomonadati</taxon>
        <taxon>Pseudomonadota</taxon>
        <taxon>Gammaproteobacteria</taxon>
        <taxon>Enterobacterales</taxon>
        <taxon>Morganellaceae</taxon>
        <taxon>Xenorhabdus</taxon>
    </lineage>
</organism>
<reference key="1">
    <citation type="journal article" date="2011" name="PLoS ONE">
        <title>The entomopathogenic bacterial endosymbionts xenorhabdus and photorhabdus: convergent lifestyles from divergent genomes.</title>
        <authorList>
            <person name="Chaston J.M."/>
            <person name="Suen G."/>
            <person name="Tucker S.L."/>
            <person name="Andersen A.W."/>
            <person name="Bhasin A."/>
            <person name="Bode E."/>
            <person name="Bode H.B."/>
            <person name="Brachmann A.O."/>
            <person name="Cowles C.E."/>
            <person name="Cowles K.N."/>
            <person name="Darby C."/>
            <person name="de Leon L."/>
            <person name="Drace K."/>
            <person name="Du Z."/>
            <person name="Givaudan A."/>
            <person name="Herbert Tran E.E."/>
            <person name="Jewell K.A."/>
            <person name="Knack J.J."/>
            <person name="Krasomil-Osterfeld K.C."/>
            <person name="Kukor R."/>
            <person name="Lanois A."/>
            <person name="Latreille P."/>
            <person name="Leimgruber N.K."/>
            <person name="Lipke C.M."/>
            <person name="Liu R."/>
            <person name="Lu X."/>
            <person name="Martens E.C."/>
            <person name="Marri P.R."/>
            <person name="Medigue C."/>
            <person name="Menard M.L."/>
            <person name="Miller N.M."/>
            <person name="Morales-Soto N."/>
            <person name="Norton S."/>
            <person name="Ogier J.C."/>
            <person name="Orchard S.S."/>
            <person name="Park D."/>
            <person name="Park Y."/>
            <person name="Qurollo B.A."/>
            <person name="Sugar D.R."/>
            <person name="Richards G.R."/>
            <person name="Rouy Z."/>
            <person name="Slominski B."/>
            <person name="Slominski K."/>
            <person name="Snyder H."/>
            <person name="Tjaden B.C."/>
            <person name="van der Hoeven R."/>
            <person name="Welch R.D."/>
            <person name="Wheeler C."/>
            <person name="Xiang B."/>
            <person name="Barbazuk B."/>
            <person name="Gaudriault S."/>
            <person name="Goodner B."/>
            <person name="Slater S.C."/>
            <person name="Forst S."/>
            <person name="Goldman B.S."/>
            <person name="Goodrich-Blair H."/>
        </authorList>
    </citation>
    <scope>NUCLEOTIDE SEQUENCE [LARGE SCALE GENOMIC DNA]</scope>
    <source>
        <strain>ATCC 19061 / DSM 3370 / CCUG 14189 / LMG 1036 / NCIMB 9965 / AN6</strain>
    </source>
</reference>
<dbReference type="EMBL" id="FN667742">
    <property type="protein sequence ID" value="CBJ90780.1"/>
    <property type="status" value="ALT_INIT"/>
    <property type="molecule type" value="Genomic_DNA"/>
</dbReference>
<dbReference type="RefSeq" id="WP_038220342.1">
    <property type="nucleotide sequence ID" value="NC_014228.1"/>
</dbReference>
<dbReference type="SMR" id="D3VIE0"/>
<dbReference type="STRING" id="406817.XNC1_2726"/>
<dbReference type="GeneID" id="24903276"/>
<dbReference type="KEGG" id="xne:XNC1_2726"/>
<dbReference type="eggNOG" id="COG3417">
    <property type="taxonomic scope" value="Bacteria"/>
</dbReference>
<dbReference type="HOGENOM" id="CLU_092328_0_0_6"/>
<dbReference type="Proteomes" id="UP000008075">
    <property type="component" value="Chromosome"/>
</dbReference>
<dbReference type="GO" id="GO:0031241">
    <property type="term" value="C:periplasmic side of cell outer membrane"/>
    <property type="evidence" value="ECO:0007669"/>
    <property type="project" value="UniProtKB-UniRule"/>
</dbReference>
<dbReference type="GO" id="GO:0030234">
    <property type="term" value="F:enzyme regulator activity"/>
    <property type="evidence" value="ECO:0007669"/>
    <property type="project" value="UniProtKB-UniRule"/>
</dbReference>
<dbReference type="GO" id="GO:0009252">
    <property type="term" value="P:peptidoglycan biosynthetic process"/>
    <property type="evidence" value="ECO:0007669"/>
    <property type="project" value="UniProtKB-UniRule"/>
</dbReference>
<dbReference type="GO" id="GO:0008360">
    <property type="term" value="P:regulation of cell shape"/>
    <property type="evidence" value="ECO:0007669"/>
    <property type="project" value="UniProtKB-KW"/>
</dbReference>
<dbReference type="Gene3D" id="3.40.50.10610">
    <property type="entry name" value="ABC-type transport auxiliary lipoprotein component"/>
    <property type="match status" value="1"/>
</dbReference>
<dbReference type="HAMAP" id="MF_01889">
    <property type="entry name" value="LpoB"/>
    <property type="match status" value="1"/>
</dbReference>
<dbReference type="InterPro" id="IPR014094">
    <property type="entry name" value="LpoB"/>
</dbReference>
<dbReference type="NCBIfam" id="TIGR02722">
    <property type="entry name" value="lp"/>
    <property type="match status" value="1"/>
</dbReference>
<dbReference type="PANTHER" id="PTHR40593">
    <property type="entry name" value="PENICILLIN-BINDING PROTEIN ACTIVATOR LPOB"/>
    <property type="match status" value="1"/>
</dbReference>
<dbReference type="PANTHER" id="PTHR40593:SF1">
    <property type="entry name" value="PENICILLIN-BINDING PROTEIN ACTIVATOR LPOB"/>
    <property type="match status" value="1"/>
</dbReference>
<dbReference type="Pfam" id="PF13036">
    <property type="entry name" value="LpoB"/>
    <property type="match status" value="1"/>
</dbReference>
<dbReference type="PROSITE" id="PS51257">
    <property type="entry name" value="PROKAR_LIPOPROTEIN"/>
    <property type="match status" value="1"/>
</dbReference>
<sequence length="191" mass="21063">MKRILFVILSTMLLASCVLPEATQQPAPVTPVEPKEKQETTPIEPSEKVLQPPKIQSINWNGIVQPLIEEMAKAHGVETGKVLLVDSVKNNTNGSLRTLKATEAIIDAISNKHIFQIVSRSQIHLARQALGLSTEDSLGLRSKSIGLARYLSADYVLYSVVSSNKGQRDLEMQLMLVKTGEILWSGHRDIN</sequence>
<name>LPOB_XENNA</name>
<protein>
    <recommendedName>
        <fullName evidence="1">Penicillin-binding protein activator LpoB</fullName>
        <shortName evidence="1">PBP activator LpoB</shortName>
    </recommendedName>
</protein>
<keyword id="KW-0998">Cell outer membrane</keyword>
<keyword id="KW-0133">Cell shape</keyword>
<keyword id="KW-0449">Lipoprotein</keyword>
<keyword id="KW-0472">Membrane</keyword>
<keyword id="KW-0564">Palmitate</keyword>
<keyword id="KW-0573">Peptidoglycan synthesis</keyword>
<keyword id="KW-1185">Reference proteome</keyword>
<keyword id="KW-0732">Signal</keyword>
<evidence type="ECO:0000255" key="1">
    <source>
        <dbReference type="HAMAP-Rule" id="MF_01889"/>
    </source>
</evidence>
<evidence type="ECO:0000256" key="2">
    <source>
        <dbReference type="SAM" id="MobiDB-lite"/>
    </source>
</evidence>
<evidence type="ECO:0000305" key="3"/>
<accession>D3VIE0</accession>
<proteinExistence type="inferred from homology"/>
<gene>
    <name evidence="1" type="primary">lpoB</name>
    <name type="ordered locus">XNC1_2726</name>
</gene>
<comment type="function">
    <text evidence="1">Regulator of peptidoglycan synthesis that is essential for the function of penicillin-binding protein 1B (PBP1b).</text>
</comment>
<comment type="subunit">
    <text evidence="1">Interacts with PBP1b.</text>
</comment>
<comment type="subcellular location">
    <subcellularLocation>
        <location evidence="1">Cell outer membrane</location>
        <topology evidence="1">Lipid-anchor</topology>
        <orientation evidence="1">Periplasmic side</orientation>
    </subcellularLocation>
</comment>
<comment type="similarity">
    <text evidence="1">Belongs to the LpoB family.</text>
</comment>
<comment type="sequence caution" evidence="3">
    <conflict type="erroneous initiation">
        <sequence resource="EMBL-CDS" id="CBJ90780"/>
    </conflict>
    <text>Truncated N-terminus.</text>
</comment>
<feature type="signal peptide" evidence="1">
    <location>
        <begin position="1"/>
        <end position="16"/>
    </location>
</feature>
<feature type="chain" id="PRO_0000405793" description="Penicillin-binding protein activator LpoB">
    <location>
        <begin position="17"/>
        <end position="191"/>
    </location>
</feature>
<feature type="region of interest" description="Disordered" evidence="2">
    <location>
        <begin position="25"/>
        <end position="48"/>
    </location>
</feature>
<feature type="lipid moiety-binding region" description="N-palmitoyl cysteine" evidence="1">
    <location>
        <position position="17"/>
    </location>
</feature>
<feature type="lipid moiety-binding region" description="S-diacylglycerol cysteine" evidence="1">
    <location>
        <position position="17"/>
    </location>
</feature>